<feature type="chain" id="PRO_1000023601" description="Arginine repressor">
    <location>
        <begin position="1"/>
        <end position="156"/>
    </location>
</feature>
<evidence type="ECO:0000255" key="1">
    <source>
        <dbReference type="HAMAP-Rule" id="MF_00173"/>
    </source>
</evidence>
<proteinExistence type="inferred from homology"/>
<name>ARGR_SODGM</name>
<keyword id="KW-0028">Amino-acid biosynthesis</keyword>
<keyword id="KW-0055">Arginine biosynthesis</keyword>
<keyword id="KW-0963">Cytoplasm</keyword>
<keyword id="KW-0238">DNA-binding</keyword>
<keyword id="KW-0678">Repressor</keyword>
<keyword id="KW-0804">Transcription</keyword>
<keyword id="KW-0805">Transcription regulation</keyword>
<organism>
    <name type="scientific">Sodalis glossinidius (strain morsitans)</name>
    <dbReference type="NCBI Taxonomy" id="343509"/>
    <lineage>
        <taxon>Bacteria</taxon>
        <taxon>Pseudomonadati</taxon>
        <taxon>Pseudomonadota</taxon>
        <taxon>Gammaproteobacteria</taxon>
        <taxon>Enterobacterales</taxon>
        <taxon>Bruguierivoracaceae</taxon>
        <taxon>Sodalis</taxon>
    </lineage>
</organism>
<comment type="function">
    <text evidence="1">Regulates arginine biosynthesis genes.</text>
</comment>
<comment type="pathway">
    <text>Amino-acid biosynthesis; L-arginine biosynthesis [regulation].</text>
</comment>
<comment type="subcellular location">
    <subcellularLocation>
        <location evidence="1">Cytoplasm</location>
    </subcellularLocation>
</comment>
<comment type="similarity">
    <text evidence="1">Belongs to the ArgR family.</text>
</comment>
<reference key="1">
    <citation type="journal article" date="2006" name="Genome Res.">
        <title>Massive genome erosion and functional adaptations provide insights into the symbiotic lifestyle of Sodalis glossinidius in the tsetse host.</title>
        <authorList>
            <person name="Toh H."/>
            <person name="Weiss B.L."/>
            <person name="Perkin S.A.H."/>
            <person name="Yamashita A."/>
            <person name="Oshima K."/>
            <person name="Hattori M."/>
            <person name="Aksoy S."/>
        </authorList>
    </citation>
    <scope>NUCLEOTIDE SEQUENCE [LARGE SCALE GENOMIC DNA]</scope>
    <source>
        <strain>morsitans</strain>
    </source>
</reference>
<dbReference type="EMBL" id="AP008232">
    <property type="protein sequence ID" value="BAE73634.1"/>
    <property type="molecule type" value="Genomic_DNA"/>
</dbReference>
<dbReference type="RefSeq" id="WP_011410222.1">
    <property type="nucleotide sequence ID" value="NZ_LN854557.1"/>
</dbReference>
<dbReference type="SMR" id="Q2NW41"/>
<dbReference type="STRING" id="343509.SG0359"/>
<dbReference type="KEGG" id="sgl:SG0359"/>
<dbReference type="eggNOG" id="COG1438">
    <property type="taxonomic scope" value="Bacteria"/>
</dbReference>
<dbReference type="HOGENOM" id="CLU_097103_2_0_6"/>
<dbReference type="OrthoDB" id="7060358at2"/>
<dbReference type="UniPathway" id="UPA00068"/>
<dbReference type="Proteomes" id="UP000001932">
    <property type="component" value="Chromosome"/>
</dbReference>
<dbReference type="GO" id="GO:0005737">
    <property type="term" value="C:cytoplasm"/>
    <property type="evidence" value="ECO:0007669"/>
    <property type="project" value="UniProtKB-SubCell"/>
</dbReference>
<dbReference type="GO" id="GO:0034618">
    <property type="term" value="F:arginine binding"/>
    <property type="evidence" value="ECO:0007669"/>
    <property type="project" value="InterPro"/>
</dbReference>
<dbReference type="GO" id="GO:0003677">
    <property type="term" value="F:DNA binding"/>
    <property type="evidence" value="ECO:0007669"/>
    <property type="project" value="UniProtKB-KW"/>
</dbReference>
<dbReference type="GO" id="GO:0003700">
    <property type="term" value="F:DNA-binding transcription factor activity"/>
    <property type="evidence" value="ECO:0007669"/>
    <property type="project" value="UniProtKB-UniRule"/>
</dbReference>
<dbReference type="GO" id="GO:0006526">
    <property type="term" value="P:L-arginine biosynthetic process"/>
    <property type="evidence" value="ECO:0007669"/>
    <property type="project" value="UniProtKB-UniPathway"/>
</dbReference>
<dbReference type="GO" id="GO:0051259">
    <property type="term" value="P:protein complex oligomerization"/>
    <property type="evidence" value="ECO:0007669"/>
    <property type="project" value="InterPro"/>
</dbReference>
<dbReference type="GO" id="GO:1900079">
    <property type="term" value="P:regulation of arginine biosynthetic process"/>
    <property type="evidence" value="ECO:0007669"/>
    <property type="project" value="UniProtKB-UniRule"/>
</dbReference>
<dbReference type="FunFam" id="3.30.1360.40:FF:000004">
    <property type="entry name" value="Arginine repressor"/>
    <property type="match status" value="1"/>
</dbReference>
<dbReference type="Gene3D" id="3.30.1360.40">
    <property type="match status" value="1"/>
</dbReference>
<dbReference type="Gene3D" id="1.10.10.10">
    <property type="entry name" value="Winged helix-like DNA-binding domain superfamily/Winged helix DNA-binding domain"/>
    <property type="match status" value="1"/>
</dbReference>
<dbReference type="HAMAP" id="MF_00173">
    <property type="entry name" value="Arg_repressor"/>
    <property type="match status" value="1"/>
</dbReference>
<dbReference type="InterPro" id="IPR001669">
    <property type="entry name" value="Arg_repress"/>
</dbReference>
<dbReference type="InterPro" id="IPR020899">
    <property type="entry name" value="Arg_repress_C"/>
</dbReference>
<dbReference type="InterPro" id="IPR036251">
    <property type="entry name" value="Arg_repress_C_sf"/>
</dbReference>
<dbReference type="InterPro" id="IPR020900">
    <property type="entry name" value="Arg_repress_DNA-bd"/>
</dbReference>
<dbReference type="InterPro" id="IPR036388">
    <property type="entry name" value="WH-like_DNA-bd_sf"/>
</dbReference>
<dbReference type="InterPro" id="IPR036390">
    <property type="entry name" value="WH_DNA-bd_sf"/>
</dbReference>
<dbReference type="NCBIfam" id="TIGR01529">
    <property type="entry name" value="argR_whole"/>
    <property type="match status" value="1"/>
</dbReference>
<dbReference type="NCBIfam" id="NF003457">
    <property type="entry name" value="PRK05066.1"/>
    <property type="match status" value="1"/>
</dbReference>
<dbReference type="PANTHER" id="PTHR34471">
    <property type="entry name" value="ARGININE REPRESSOR"/>
    <property type="match status" value="1"/>
</dbReference>
<dbReference type="PANTHER" id="PTHR34471:SF1">
    <property type="entry name" value="ARGININE REPRESSOR"/>
    <property type="match status" value="1"/>
</dbReference>
<dbReference type="Pfam" id="PF01316">
    <property type="entry name" value="Arg_repressor"/>
    <property type="match status" value="1"/>
</dbReference>
<dbReference type="Pfam" id="PF02863">
    <property type="entry name" value="Arg_repressor_C"/>
    <property type="match status" value="1"/>
</dbReference>
<dbReference type="PRINTS" id="PR01467">
    <property type="entry name" value="ARGREPRESSOR"/>
</dbReference>
<dbReference type="SUPFAM" id="SSF55252">
    <property type="entry name" value="C-terminal domain of arginine repressor"/>
    <property type="match status" value="1"/>
</dbReference>
<dbReference type="SUPFAM" id="SSF46785">
    <property type="entry name" value="Winged helix' DNA-binding domain"/>
    <property type="match status" value="1"/>
</dbReference>
<protein>
    <recommendedName>
        <fullName evidence="1">Arginine repressor</fullName>
    </recommendedName>
</protein>
<sequence>MRNQSKQEELVKAFKALLKEEKFSSQGEIVLALQEAGFENINQSKVSRMLTKFGAVRTRNAKMEMVYCLQAELGVPTASSPLKNLVLDVDHNDALVVIHTSPGAAQLIARMLDSLGKSEGILGTIAGDDTVFTTPAPGFSVKRLYHFILVHFNQEL</sequence>
<accession>Q2NW41</accession>
<gene>
    <name evidence="1" type="primary">argR</name>
    <name type="ordered locus">SG0359</name>
</gene>